<dbReference type="EC" id="3.2.1.18" evidence="4 5"/>
<dbReference type="EMBL" id="AF139059">
    <property type="status" value="NOT_ANNOTATED_CDS"/>
    <property type="molecule type" value="mRNA"/>
</dbReference>
<dbReference type="EMBL" id="AB028023">
    <property type="protein sequence ID" value="BAA92867.1"/>
    <property type="molecule type" value="mRNA"/>
</dbReference>
<dbReference type="EMBL" id="AB048604">
    <property type="protein sequence ID" value="BAB39152.1"/>
    <property type="status" value="ALT_INIT"/>
    <property type="molecule type" value="mRNA"/>
</dbReference>
<dbReference type="CCDS" id="CCDS15135.1"/>
<dbReference type="CCDS" id="CCDS48308.1"/>
<dbReference type="CCDS" id="CCDS48309.1"/>
<dbReference type="RefSeq" id="NP_001153635.2">
    <property type="nucleotide sequence ID" value="NM_001160163.2"/>
</dbReference>
<dbReference type="RefSeq" id="NP_001153636.1">
    <property type="nucleotide sequence ID" value="NM_001160164.2"/>
</dbReference>
<dbReference type="RefSeq" id="NP_001153637.2">
    <property type="nucleotide sequence ID" value="NM_001160165.2"/>
</dbReference>
<dbReference type="RefSeq" id="NP_001407607.1">
    <property type="nucleotide sequence ID" value="NM_001420678.1"/>
</dbReference>
<dbReference type="RefSeq" id="NP_001407608.1">
    <property type="nucleotide sequence ID" value="NM_001420679.1"/>
</dbReference>
<dbReference type="RefSeq" id="NP_056565.1">
    <property type="nucleotide sequence ID" value="NM_015750.4"/>
</dbReference>
<dbReference type="RefSeq" id="XP_006529587.1">
    <property type="nucleotide sequence ID" value="XM_006529524.5"/>
</dbReference>
<dbReference type="SMR" id="Q9JMH3"/>
<dbReference type="BioGRID" id="204817">
    <property type="interactions" value="2"/>
</dbReference>
<dbReference type="FunCoup" id="Q9JMH3">
    <property type="interactions" value="90"/>
</dbReference>
<dbReference type="STRING" id="10090.ENSMUSP00000131409"/>
<dbReference type="ChEMBL" id="CHEMBL4296071"/>
<dbReference type="CAZy" id="GH33">
    <property type="family name" value="Glycoside Hydrolase Family 33"/>
</dbReference>
<dbReference type="iPTMnet" id="Q9JMH3"/>
<dbReference type="PhosphoSitePlus" id="Q9JMH3"/>
<dbReference type="PaxDb" id="10090-ENSMUSP00000127913"/>
<dbReference type="ProteomicsDB" id="287389"/>
<dbReference type="Antibodypedia" id="34447">
    <property type="antibodies" value="265 antibodies from 28 providers"/>
</dbReference>
<dbReference type="DNASU" id="23956"/>
<dbReference type="Ensembl" id="ENSMUST00000070898.6">
    <property type="protein sequence ID" value="ENSMUSP00000065439.6"/>
    <property type="gene ID" value="ENSMUSG00000079434.9"/>
</dbReference>
<dbReference type="Ensembl" id="ENSMUST00000165109.2">
    <property type="protein sequence ID" value="ENSMUSP00000126509.2"/>
    <property type="gene ID" value="ENSMUSG00000079434.9"/>
</dbReference>
<dbReference type="Ensembl" id="ENSMUST00000166259.8">
    <property type="protein sequence ID" value="ENSMUSP00000132513.2"/>
    <property type="gene ID" value="ENSMUSG00000079434.9"/>
</dbReference>
<dbReference type="GeneID" id="23956"/>
<dbReference type="KEGG" id="mmu:23956"/>
<dbReference type="UCSC" id="uc007bxa.2">
    <property type="organism name" value="mouse"/>
</dbReference>
<dbReference type="AGR" id="MGI:1344417"/>
<dbReference type="CTD" id="4759"/>
<dbReference type="MGI" id="MGI:1344417">
    <property type="gene designation" value="Neu2"/>
</dbReference>
<dbReference type="VEuPathDB" id="HostDB:ENSMUSG00000079434"/>
<dbReference type="eggNOG" id="ENOG502QSFT">
    <property type="taxonomic scope" value="Eukaryota"/>
</dbReference>
<dbReference type="GeneTree" id="ENSGT00950000182944"/>
<dbReference type="HOGENOM" id="CLU_024620_2_1_1"/>
<dbReference type="InParanoid" id="Q9JMH3"/>
<dbReference type="OrthoDB" id="2739686at2759"/>
<dbReference type="PhylomeDB" id="Q9JMH3"/>
<dbReference type="TreeFam" id="TF331063"/>
<dbReference type="Reactome" id="R-MMU-4085001">
    <property type="pathway name" value="Sialic acid metabolism"/>
</dbReference>
<dbReference type="Reactome" id="R-MMU-9840310">
    <property type="pathway name" value="Glycosphingolipid catabolism"/>
</dbReference>
<dbReference type="BioGRID-ORCS" id="23956">
    <property type="hits" value="3 hits in 78 CRISPR screens"/>
</dbReference>
<dbReference type="ChiTaRS" id="Neu2">
    <property type="organism name" value="mouse"/>
</dbReference>
<dbReference type="PRO" id="PR:Q9JMH3"/>
<dbReference type="Proteomes" id="UP000000589">
    <property type="component" value="Chromosome 1"/>
</dbReference>
<dbReference type="RNAct" id="Q9JMH3">
    <property type="molecule type" value="protein"/>
</dbReference>
<dbReference type="Bgee" id="ENSMUSG00000079434">
    <property type="expression patterns" value="Expressed in temporalis muscle and 70 other cell types or tissues"/>
</dbReference>
<dbReference type="ExpressionAtlas" id="Q9JMH3">
    <property type="expression patterns" value="baseline and differential"/>
</dbReference>
<dbReference type="GO" id="GO:1902494">
    <property type="term" value="C:catalytic complex"/>
    <property type="evidence" value="ECO:0007669"/>
    <property type="project" value="Ensembl"/>
</dbReference>
<dbReference type="GO" id="GO:0005829">
    <property type="term" value="C:cytosol"/>
    <property type="evidence" value="ECO:0007669"/>
    <property type="project" value="UniProtKB-SubCell"/>
</dbReference>
<dbReference type="GO" id="GO:0016020">
    <property type="term" value="C:membrane"/>
    <property type="evidence" value="ECO:0007669"/>
    <property type="project" value="GOC"/>
</dbReference>
<dbReference type="GO" id="GO:0004308">
    <property type="term" value="F:exo-alpha-sialidase activity"/>
    <property type="evidence" value="ECO:0000314"/>
    <property type="project" value="UniProtKB"/>
</dbReference>
<dbReference type="GO" id="GO:0006689">
    <property type="term" value="P:ganglioside catabolic process"/>
    <property type="evidence" value="ECO:0000314"/>
    <property type="project" value="UniProtKB"/>
</dbReference>
<dbReference type="GO" id="GO:0006516">
    <property type="term" value="P:glycoprotein catabolic process"/>
    <property type="evidence" value="ECO:0007669"/>
    <property type="project" value="Ensembl"/>
</dbReference>
<dbReference type="GO" id="GO:0009313">
    <property type="term" value="P:oligosaccharide catabolic process"/>
    <property type="evidence" value="ECO:0000314"/>
    <property type="project" value="UniProtKB"/>
</dbReference>
<dbReference type="CDD" id="cd15482">
    <property type="entry name" value="Sialidase_non-viral"/>
    <property type="match status" value="1"/>
</dbReference>
<dbReference type="FunFam" id="2.120.10.10:FF:000002">
    <property type="entry name" value="Neuraminidase 3"/>
    <property type="match status" value="1"/>
</dbReference>
<dbReference type="Gene3D" id="2.120.10.10">
    <property type="match status" value="1"/>
</dbReference>
<dbReference type="InterPro" id="IPR011040">
    <property type="entry name" value="Sialidase"/>
</dbReference>
<dbReference type="InterPro" id="IPR026856">
    <property type="entry name" value="Sialidase_fam"/>
</dbReference>
<dbReference type="InterPro" id="IPR036278">
    <property type="entry name" value="Sialidase_sf"/>
</dbReference>
<dbReference type="PANTHER" id="PTHR10628">
    <property type="entry name" value="SIALIDASE"/>
    <property type="match status" value="1"/>
</dbReference>
<dbReference type="PANTHER" id="PTHR10628:SF6">
    <property type="entry name" value="SIALIDASE-2"/>
    <property type="match status" value="1"/>
</dbReference>
<dbReference type="Pfam" id="PF13088">
    <property type="entry name" value="BNR_2"/>
    <property type="match status" value="1"/>
</dbReference>
<dbReference type="SUPFAM" id="SSF50939">
    <property type="entry name" value="Sialidases"/>
    <property type="match status" value="1"/>
</dbReference>
<keyword id="KW-0119">Carbohydrate metabolism</keyword>
<keyword id="KW-0963">Cytoplasm</keyword>
<keyword id="KW-0326">Glycosidase</keyword>
<keyword id="KW-0378">Hydrolase</keyword>
<keyword id="KW-0442">Lipid degradation</keyword>
<keyword id="KW-0443">Lipid metabolism</keyword>
<keyword id="KW-1185">Reference proteome</keyword>
<keyword id="KW-0677">Repeat</keyword>
<name>NEUR2_MOUSE</name>
<organism>
    <name type="scientific">Mus musculus</name>
    <name type="common">Mouse</name>
    <dbReference type="NCBI Taxonomy" id="10090"/>
    <lineage>
        <taxon>Eukaryota</taxon>
        <taxon>Metazoa</taxon>
        <taxon>Chordata</taxon>
        <taxon>Craniata</taxon>
        <taxon>Vertebrata</taxon>
        <taxon>Euteleostomi</taxon>
        <taxon>Mammalia</taxon>
        <taxon>Eutheria</taxon>
        <taxon>Euarchontoglires</taxon>
        <taxon>Glires</taxon>
        <taxon>Rodentia</taxon>
        <taxon>Myomorpha</taxon>
        <taxon>Muroidea</taxon>
        <taxon>Muridae</taxon>
        <taxon>Murinae</taxon>
        <taxon>Mus</taxon>
        <taxon>Mus</taxon>
    </lineage>
</organism>
<accession>Q9JMH3</accession>
<accession>Q99NA3</accession>
<sequence>MATCPVLQKETLFRTGVHAYRIPALLYLKKQKTLLAFAEKRASKTDEHAELIVLRRGSYNEATNRVKWQPEEVVTQAQLEGHRSMNPCPLYDKQTKTLFLFFIAVPGRVSEHHQLHTKVNVTRLCCVSSTDHGRTWSPIQDLTETTIGSTHQEWATFAVGPGHCLQLRNPAGSLLVPAYAYRKLHPAQKPTPFAFCFISLDHGHTWKLGNFVAENSLECQVAEVGTGAQRMVYLNARSFLGARVQAQSPNDGLDFQDNRVVSKLVEPPHGCHGSVVAFHNPISKPHALDTWLLYTHPTDSRNRTNLGVYLNQMPLDPTAWSEPTLLAMGICAYSDLQNMGQGPDGSPQFGCLYESGNYEEIIFLIFTLKQAFPTVFDAQ</sequence>
<proteinExistence type="evidence at protein level"/>
<comment type="function">
    <text evidence="2 5">Exo-alpha-sialidase that catalyzes the hydrolytic cleavage of the terminal sialic acid (N-acetylneuraminic acid, Neu5Ac) of a glycan moiety in the catabolism of glycolipids, glycoproteins and oligosacharides (PubMed:10713120). Recognizes sialyl linkage positions of the glycan moiety as well as the supramolecular organization of the sialoglycoconjugate (By similarity). Displays preference for alpha-(2-&gt;3)-sialylated GD1a and GT1B gangliosides over alpha-(2-&gt;8)-sialylated GD1b, in both monomeric forms and micelles (PubMed:10713120). Hydrolyzes exclusively monomeric GM1 ganglioside, but has no activity toward the miscellar form (By similarity). Has lower sialidase activity for glycoproteins such as fetuin and TF/transferrin that carry a mixture of alpha-(2-&gt;3) and alpha-(2-&gt;6)-sialyl linkages (By similarity). Cleaves milk oligosaccharide alpha-(2-&gt;3)-sialyllactose, but is inactive toward isomer alpha-(2-&gt;6)-sialyllactose isomer. Has no activity toward colominic acid, a homomer of alpha-(2-&gt;8)-linked Neu5Ac residues (By similarity).</text>
</comment>
<comment type="catalytic activity">
    <reaction evidence="4 5">
        <text>Hydrolysis of alpha-(2-&gt;3)-, alpha-(2-&gt;6)-, alpha-(2-&gt;8)- glycosidic linkages of terminal sialic acid residues in oligosaccharides, glycoproteins, glycolipids, colominic acid and synthetic substrates.</text>
        <dbReference type="EC" id="3.2.1.18"/>
    </reaction>
</comment>
<comment type="catalytic activity">
    <reaction evidence="5">
        <text>a ganglioside GD1a + H2O = a ganglioside GM1 + N-acetylneuraminate</text>
        <dbReference type="Rhea" id="RHEA:47832"/>
        <dbReference type="ChEBI" id="CHEBI:15377"/>
        <dbReference type="ChEBI" id="CHEBI:35418"/>
        <dbReference type="ChEBI" id="CHEBI:82637"/>
        <dbReference type="ChEBI" id="CHEBI:82639"/>
    </reaction>
    <physiologicalReaction direction="left-to-right" evidence="7">
        <dbReference type="Rhea" id="RHEA:47833"/>
    </physiologicalReaction>
</comment>
<comment type="catalytic activity">
    <reaction evidence="2">
        <text>a ganglioside GM1 + H2O = a ganglioside GA1 + N-acetylneuraminate</text>
        <dbReference type="Rhea" id="RHEA:47872"/>
        <dbReference type="ChEBI" id="CHEBI:15377"/>
        <dbReference type="ChEBI" id="CHEBI:35418"/>
        <dbReference type="ChEBI" id="CHEBI:82639"/>
        <dbReference type="ChEBI" id="CHEBI:88069"/>
    </reaction>
    <physiologicalReaction direction="left-to-right" evidence="2">
        <dbReference type="Rhea" id="RHEA:47873"/>
    </physiologicalReaction>
</comment>
<comment type="catalytic activity">
    <reaction evidence="2">
        <text>a ganglioside GT1b + H2O = a ganglioside GD1b + N-acetylneuraminate</text>
        <dbReference type="Rhea" id="RHEA:47828"/>
        <dbReference type="ChEBI" id="CHEBI:15377"/>
        <dbReference type="ChEBI" id="CHEBI:35418"/>
        <dbReference type="ChEBI" id="CHEBI:82939"/>
        <dbReference type="ChEBI" id="CHEBI:82940"/>
    </reaction>
    <physiologicalReaction direction="left-to-right" evidence="2">
        <dbReference type="Rhea" id="RHEA:47829"/>
    </physiologicalReaction>
</comment>
<comment type="catalytic activity">
    <reaction evidence="2">
        <text>a ganglioside GD1b + H2O = a ganglioside GM1 + N-acetylneuraminate</text>
        <dbReference type="Rhea" id="RHEA:47876"/>
        <dbReference type="ChEBI" id="CHEBI:15377"/>
        <dbReference type="ChEBI" id="CHEBI:35418"/>
        <dbReference type="ChEBI" id="CHEBI:82639"/>
        <dbReference type="ChEBI" id="CHEBI:82939"/>
    </reaction>
    <physiologicalReaction direction="left-to-right" evidence="2">
        <dbReference type="Rhea" id="RHEA:47877"/>
    </physiologicalReaction>
</comment>
<comment type="catalytic activity">
    <reaction evidence="5">
        <text>a ganglioside GD3 + H2O = a ganglioside GM3 + N-acetylneuraminate</text>
        <dbReference type="Rhea" id="RHEA:48120"/>
        <dbReference type="ChEBI" id="CHEBI:15377"/>
        <dbReference type="ChEBI" id="CHEBI:35418"/>
        <dbReference type="ChEBI" id="CHEBI:79210"/>
        <dbReference type="ChEBI" id="CHEBI:79214"/>
    </reaction>
    <physiologicalReaction direction="left-to-right" evidence="7">
        <dbReference type="Rhea" id="RHEA:48121"/>
    </physiologicalReaction>
</comment>
<comment type="catalytic activity">
    <reaction evidence="5">
        <text>a ganglioside GM3 + H2O = a beta-D-galactosyl-(1-&gt;4)-beta-D-glucosyl-(1&lt;-&gt;1)-ceramide + N-acetylneuraminate</text>
        <dbReference type="Rhea" id="RHEA:48136"/>
        <dbReference type="ChEBI" id="CHEBI:15377"/>
        <dbReference type="ChEBI" id="CHEBI:35418"/>
        <dbReference type="ChEBI" id="CHEBI:79208"/>
        <dbReference type="ChEBI" id="CHEBI:79210"/>
    </reaction>
    <physiologicalReaction direction="left-to-right" evidence="7">
        <dbReference type="Rhea" id="RHEA:48137"/>
    </physiologicalReaction>
</comment>
<comment type="catalytic activity">
    <reaction evidence="5">
        <text>a ganglioside GM2 + H2O = a ganglioside GA2 + N-acetylneuraminate</text>
        <dbReference type="Rhea" id="RHEA:48172"/>
        <dbReference type="ChEBI" id="CHEBI:15377"/>
        <dbReference type="ChEBI" id="CHEBI:35418"/>
        <dbReference type="ChEBI" id="CHEBI:79218"/>
        <dbReference type="ChEBI" id="CHEBI:90085"/>
    </reaction>
    <physiologicalReaction direction="left-to-right" evidence="7">
        <dbReference type="Rhea" id="RHEA:48173"/>
    </physiologicalReaction>
</comment>
<comment type="catalytic activity">
    <reaction evidence="2">
        <text>a neolactoside IV(3)-alpha-NeuAc-nLc4Cer(d18:1(4E)) + H2O = a neolactoside nLc4Cer(d18:1(4E)) + N-acetylneuraminate</text>
        <dbReference type="Rhea" id="RHEA:47852"/>
        <dbReference type="ChEBI" id="CHEBI:15377"/>
        <dbReference type="ChEBI" id="CHEBI:17006"/>
        <dbReference type="ChEBI" id="CHEBI:35418"/>
        <dbReference type="ChEBI" id="CHEBI:58665"/>
    </reaction>
    <physiologicalReaction direction="left-to-right" evidence="2">
        <dbReference type="Rhea" id="RHEA:47853"/>
    </physiologicalReaction>
</comment>
<comment type="catalytic activity">
    <reaction evidence="2">
        <text>N-acetyl-alpha-neuraminosyl-(2-&gt;3)-beta-D-galactosyl-(1-&gt;4)-D-glucose + H2O = lactose + N-acetylneuraminate</text>
        <dbReference type="Rhea" id="RHEA:64640"/>
        <dbReference type="ChEBI" id="CHEBI:15377"/>
        <dbReference type="ChEBI" id="CHEBI:17716"/>
        <dbReference type="ChEBI" id="CHEBI:35418"/>
        <dbReference type="ChEBI" id="CHEBI:156068"/>
    </reaction>
    <physiologicalReaction direction="left-to-right" evidence="2">
        <dbReference type="Rhea" id="RHEA:64641"/>
    </physiologicalReaction>
</comment>
<comment type="subcellular location">
    <subcellularLocation>
        <location evidence="2">Cytoplasm</location>
        <location evidence="2">Cytosol</location>
    </subcellularLocation>
</comment>
<comment type="tissue specificity">
    <text evidence="5">Highly expressed in heart.</text>
</comment>
<comment type="similarity">
    <text evidence="6">Belongs to the glycosyl hydrolase 33 family.</text>
</comment>
<comment type="sequence caution" evidence="6">
    <conflict type="erroneous initiation">
        <sequence resource="EMBL-CDS" id="BAB39152"/>
    </conflict>
</comment>
<protein>
    <recommendedName>
        <fullName>Sialidase-2</fullName>
        <ecNumber evidence="4 5">3.2.1.18</ecNumber>
    </recommendedName>
    <alternativeName>
        <fullName>Cytosolic sialidase</fullName>
    </alternativeName>
    <alternativeName>
        <fullName>Mouse skeletal muscle sialidase</fullName>
        <shortName>MSS</shortName>
    </alternativeName>
    <alternativeName>
        <fullName>Murine thymic sialidase</fullName>
        <shortName>MTS</shortName>
    </alternativeName>
    <alternativeName>
        <fullName>N-acetyl-alpha-neuraminidase 2</fullName>
    </alternativeName>
</protein>
<evidence type="ECO:0000250" key="1"/>
<evidence type="ECO:0000250" key="2">
    <source>
        <dbReference type="UniProtKB" id="Q9Y3R4"/>
    </source>
</evidence>
<evidence type="ECO:0000255" key="3"/>
<evidence type="ECO:0000269" key="4">
    <source>
    </source>
</evidence>
<evidence type="ECO:0000269" key="5">
    <source>
    </source>
</evidence>
<evidence type="ECO:0000305" key="6"/>
<evidence type="ECO:0000305" key="7">
    <source>
    </source>
</evidence>
<reference key="1">
    <citation type="journal article" date="1999" name="Biochem. Biophys. Res. Commun.">
        <title>Molecular cloning and expression of mouse brain sialidase.</title>
        <authorList>
            <person name="Fronda C.L."/>
            <person name="Zeng G."/>
            <person name="Gao L."/>
            <person name="Yu R.K."/>
        </authorList>
    </citation>
    <scope>NUCLEOTIDE SEQUENCE [MRNA]</scope>
    <scope>CATALYTIC ACTIVITY</scope>
    <source>
        <tissue>Brain</tissue>
    </source>
</reference>
<reference key="2">
    <citation type="journal article" date="2000" name="J. Biol. Chem.">
        <title>Molecular cloning of mouse ganglioside sialidase and its increased expression in Neuro2a cell differentiation.</title>
        <authorList>
            <person name="Hasegawa T."/>
            <person name="Yamaguchi K."/>
            <person name="Wada T."/>
            <person name="Takeda A."/>
            <person name="Itoyama Y."/>
            <person name="Miyagi T."/>
        </authorList>
    </citation>
    <scope>NUCLEOTIDE SEQUENCE [MRNA]</scope>
    <scope>TISSUE SPECIFICITY</scope>
    <scope>FUNCTION</scope>
    <scope>CATALYTIC ACTIVITY</scope>
    <source>
        <tissue>Skeletal muscle</tissue>
    </source>
</reference>
<reference key="3">
    <citation type="journal article" date="2001" name="Biochem. Biophys. Res. Commun.">
        <title>Cloning, chromosomal mapping, and characteristic 5'-UTR sequence of murine cytosolic sialidase.</title>
        <authorList>
            <person name="Kotani K."/>
            <person name="Kuroiwa A."/>
            <person name="Saito T."/>
            <person name="Matsuda Y."/>
            <person name="Koda T."/>
            <person name="Kijimoto-Ochiai S."/>
        </authorList>
    </citation>
    <scope>NUCLEOTIDE SEQUENCE [MRNA]</scope>
    <source>
        <tissue>Thymus</tissue>
    </source>
</reference>
<feature type="chain" id="PRO_0000208900" description="Sialidase-2">
    <location>
        <begin position="1"/>
        <end position="379"/>
    </location>
</feature>
<feature type="repeat" description="BNR 1">
    <location>
        <begin position="127"/>
        <end position="138"/>
    </location>
</feature>
<feature type="repeat" description="BNR 2">
    <location>
        <begin position="197"/>
        <end position="208"/>
    </location>
</feature>
<feature type="short sequence motif" description="FRIP motif">
    <location>
        <begin position="20"/>
        <end position="23"/>
    </location>
</feature>
<feature type="active site" description="Proton acceptor" evidence="1">
    <location>
        <position position="46"/>
    </location>
</feature>
<feature type="active site" evidence="1">
    <location>
        <position position="303"/>
    </location>
</feature>
<feature type="active site" description="Nucleophile" evidence="1">
    <location>
        <position position="333"/>
    </location>
</feature>
<feature type="active site" evidence="3">
    <location>
        <position position="354"/>
    </location>
</feature>
<feature type="binding site" evidence="1">
    <location>
        <position position="21"/>
    </location>
    <ligand>
        <name>substrate</name>
    </ligand>
</feature>
<feature type="binding site" evidence="1">
    <location>
        <position position="41"/>
    </location>
    <ligand>
        <name>substrate</name>
    </ligand>
</feature>
<feature type="binding site" evidence="1">
    <location>
        <position position="179"/>
    </location>
    <ligand>
        <name>substrate</name>
    </ligand>
</feature>
<feature type="binding site" evidence="1">
    <location>
        <position position="181"/>
    </location>
    <ligand>
        <name>substrate</name>
    </ligand>
</feature>
<feature type="binding site" evidence="1">
    <location>
        <position position="218"/>
    </location>
    <ligand>
        <name>substrate</name>
    </ligand>
</feature>
<feature type="binding site" evidence="3">
    <location>
        <position position="237"/>
    </location>
    <ligand>
        <name>substrate</name>
    </ligand>
</feature>
<feature type="binding site" evidence="1">
    <location>
        <position position="303"/>
    </location>
    <ligand>
        <name>substrate</name>
    </ligand>
</feature>
<feature type="sequence conflict" description="In Ref. 1; AF139059." evidence="6" ref="1">
    <original>K</original>
    <variation>R</variation>
    <location>
        <position position="40"/>
    </location>
</feature>
<feature type="sequence conflict" description="In Ref. 1; AF139059." evidence="6" ref="1">
    <original>YDKQTKT</original>
    <variation>MTSKKD</variation>
    <location>
        <begin position="91"/>
        <end position="97"/>
    </location>
</feature>
<gene>
    <name type="primary">Neu2</name>
</gene>